<feature type="chain" id="PRO_1000046465" description="Phosphoribosylformylglycinamidine cyclo-ligase">
    <location>
        <begin position="1"/>
        <end position="345"/>
    </location>
</feature>
<protein>
    <recommendedName>
        <fullName evidence="1">Phosphoribosylformylglycinamidine cyclo-ligase</fullName>
        <ecNumber evidence="1">6.3.3.1</ecNumber>
    </recommendedName>
    <alternativeName>
        <fullName evidence="1">AIR synthase</fullName>
    </alternativeName>
    <alternativeName>
        <fullName evidence="1">AIRS</fullName>
    </alternativeName>
    <alternativeName>
        <fullName evidence="1">Phosphoribosyl-aminoimidazole synthetase</fullName>
    </alternativeName>
</protein>
<accession>A3D3D1</accession>
<evidence type="ECO:0000255" key="1">
    <source>
        <dbReference type="HAMAP-Rule" id="MF_00741"/>
    </source>
</evidence>
<organism>
    <name type="scientific">Shewanella baltica (strain OS155 / ATCC BAA-1091)</name>
    <dbReference type="NCBI Taxonomy" id="325240"/>
    <lineage>
        <taxon>Bacteria</taxon>
        <taxon>Pseudomonadati</taxon>
        <taxon>Pseudomonadota</taxon>
        <taxon>Gammaproteobacteria</taxon>
        <taxon>Alteromonadales</taxon>
        <taxon>Shewanellaceae</taxon>
        <taxon>Shewanella</taxon>
    </lineage>
</organism>
<sequence length="345" mass="36733">MSTPTPLSYKDAGVDIDAGNALVSNIKAAVKRTRRPEVMGNLGGFGALCEIPTKYKQPVLVSGTDGVGTKLRLAIDYKKHDTVGIDLVAMCVNDLIVQGAEPLFFLDYYATGKLDVETATSVVNGIGEGCFQSGCALIGGETAEMPGMYEGEDYDLAGFCVGVVEKADIIDGSKVAAGDALIALASSGPHSNGYSLVRKVLEVSQADPQQDLNGKPLIEHLLEPTKIYVKSLLKLIAASDVHAMAHITGGGFWENIPRVLPDNLKAVIQGDSWQWPAVFSWLMENGNIAEYEMYRTFNCGVGMLVALPADKVDAALALLAAEGEQAWLIGAIADREGNEEQVEIL</sequence>
<proteinExistence type="inferred from homology"/>
<comment type="catalytic activity">
    <reaction evidence="1">
        <text>2-formamido-N(1)-(5-O-phospho-beta-D-ribosyl)acetamidine + ATP = 5-amino-1-(5-phospho-beta-D-ribosyl)imidazole + ADP + phosphate + H(+)</text>
        <dbReference type="Rhea" id="RHEA:23032"/>
        <dbReference type="ChEBI" id="CHEBI:15378"/>
        <dbReference type="ChEBI" id="CHEBI:30616"/>
        <dbReference type="ChEBI" id="CHEBI:43474"/>
        <dbReference type="ChEBI" id="CHEBI:137981"/>
        <dbReference type="ChEBI" id="CHEBI:147287"/>
        <dbReference type="ChEBI" id="CHEBI:456216"/>
        <dbReference type="EC" id="6.3.3.1"/>
    </reaction>
</comment>
<comment type="pathway">
    <text evidence="1">Purine metabolism; IMP biosynthesis via de novo pathway; 5-amino-1-(5-phospho-D-ribosyl)imidazole from N(2)-formyl-N(1)-(5-phospho-D-ribosyl)glycinamide: step 2/2.</text>
</comment>
<comment type="subcellular location">
    <subcellularLocation>
        <location evidence="1">Cytoplasm</location>
    </subcellularLocation>
</comment>
<comment type="similarity">
    <text evidence="1">Belongs to the AIR synthase family.</text>
</comment>
<reference key="1">
    <citation type="submission" date="2007-02" db="EMBL/GenBank/DDBJ databases">
        <title>Complete sequence of chromosome of Shewanella baltica OS155.</title>
        <authorList>
            <consortium name="US DOE Joint Genome Institute"/>
            <person name="Copeland A."/>
            <person name="Lucas S."/>
            <person name="Lapidus A."/>
            <person name="Barry K."/>
            <person name="Detter J.C."/>
            <person name="Glavina del Rio T."/>
            <person name="Hammon N."/>
            <person name="Israni S."/>
            <person name="Dalin E."/>
            <person name="Tice H."/>
            <person name="Pitluck S."/>
            <person name="Sims D.R."/>
            <person name="Brettin T."/>
            <person name="Bruce D."/>
            <person name="Han C."/>
            <person name="Tapia R."/>
            <person name="Brainard J."/>
            <person name="Schmutz J."/>
            <person name="Larimer F."/>
            <person name="Land M."/>
            <person name="Hauser L."/>
            <person name="Kyrpides N."/>
            <person name="Mikhailova N."/>
            <person name="Brettar I."/>
            <person name="Klappenbach J."/>
            <person name="Konstantinidis K."/>
            <person name="Rodrigues J."/>
            <person name="Tiedje J."/>
            <person name="Richardson P."/>
        </authorList>
    </citation>
    <scope>NUCLEOTIDE SEQUENCE [LARGE SCALE GENOMIC DNA]</scope>
    <source>
        <strain>OS155 / ATCC BAA-1091</strain>
    </source>
</reference>
<gene>
    <name evidence="1" type="primary">purM</name>
    <name type="ordered locus">Sbal_1735</name>
</gene>
<name>PUR5_SHEB5</name>
<keyword id="KW-0067">ATP-binding</keyword>
<keyword id="KW-0963">Cytoplasm</keyword>
<keyword id="KW-0436">Ligase</keyword>
<keyword id="KW-0547">Nucleotide-binding</keyword>
<keyword id="KW-0658">Purine biosynthesis</keyword>
<keyword id="KW-1185">Reference proteome</keyword>
<dbReference type="EC" id="6.3.3.1" evidence="1"/>
<dbReference type="EMBL" id="CP000563">
    <property type="protein sequence ID" value="ABN61244.1"/>
    <property type="molecule type" value="Genomic_DNA"/>
</dbReference>
<dbReference type="RefSeq" id="WP_006081244.1">
    <property type="nucleotide sequence ID" value="NC_009052.1"/>
</dbReference>
<dbReference type="SMR" id="A3D3D1"/>
<dbReference type="STRING" id="325240.Sbal_1735"/>
<dbReference type="GeneID" id="11771990"/>
<dbReference type="KEGG" id="sbl:Sbal_1735"/>
<dbReference type="HOGENOM" id="CLU_047116_0_0_6"/>
<dbReference type="OrthoDB" id="9777881at2"/>
<dbReference type="UniPathway" id="UPA00074">
    <property type="reaction ID" value="UER00129"/>
</dbReference>
<dbReference type="Proteomes" id="UP000001557">
    <property type="component" value="Chromosome"/>
</dbReference>
<dbReference type="GO" id="GO:0005829">
    <property type="term" value="C:cytosol"/>
    <property type="evidence" value="ECO:0007669"/>
    <property type="project" value="TreeGrafter"/>
</dbReference>
<dbReference type="GO" id="GO:0005524">
    <property type="term" value="F:ATP binding"/>
    <property type="evidence" value="ECO:0007669"/>
    <property type="project" value="UniProtKB-KW"/>
</dbReference>
<dbReference type="GO" id="GO:0004637">
    <property type="term" value="F:phosphoribosylamine-glycine ligase activity"/>
    <property type="evidence" value="ECO:0007669"/>
    <property type="project" value="TreeGrafter"/>
</dbReference>
<dbReference type="GO" id="GO:0004641">
    <property type="term" value="F:phosphoribosylformylglycinamidine cyclo-ligase activity"/>
    <property type="evidence" value="ECO:0007669"/>
    <property type="project" value="UniProtKB-UniRule"/>
</dbReference>
<dbReference type="GO" id="GO:0006189">
    <property type="term" value="P:'de novo' IMP biosynthetic process"/>
    <property type="evidence" value="ECO:0007669"/>
    <property type="project" value="UniProtKB-UniRule"/>
</dbReference>
<dbReference type="GO" id="GO:0046084">
    <property type="term" value="P:adenine biosynthetic process"/>
    <property type="evidence" value="ECO:0007669"/>
    <property type="project" value="TreeGrafter"/>
</dbReference>
<dbReference type="CDD" id="cd02196">
    <property type="entry name" value="PurM"/>
    <property type="match status" value="1"/>
</dbReference>
<dbReference type="FunFam" id="3.30.1330.10:FF:000001">
    <property type="entry name" value="Phosphoribosylformylglycinamidine cyclo-ligase"/>
    <property type="match status" value="1"/>
</dbReference>
<dbReference type="FunFam" id="3.90.650.10:FF:000001">
    <property type="entry name" value="Phosphoribosylformylglycinamidine cyclo-ligase"/>
    <property type="match status" value="1"/>
</dbReference>
<dbReference type="Gene3D" id="3.90.650.10">
    <property type="entry name" value="PurM-like C-terminal domain"/>
    <property type="match status" value="1"/>
</dbReference>
<dbReference type="Gene3D" id="3.30.1330.10">
    <property type="entry name" value="PurM-like, N-terminal domain"/>
    <property type="match status" value="1"/>
</dbReference>
<dbReference type="HAMAP" id="MF_00741">
    <property type="entry name" value="AIRS"/>
    <property type="match status" value="1"/>
</dbReference>
<dbReference type="InterPro" id="IPR010918">
    <property type="entry name" value="PurM-like_C_dom"/>
</dbReference>
<dbReference type="InterPro" id="IPR036676">
    <property type="entry name" value="PurM-like_C_sf"/>
</dbReference>
<dbReference type="InterPro" id="IPR016188">
    <property type="entry name" value="PurM-like_N"/>
</dbReference>
<dbReference type="InterPro" id="IPR036921">
    <property type="entry name" value="PurM-like_N_sf"/>
</dbReference>
<dbReference type="InterPro" id="IPR004733">
    <property type="entry name" value="PurM_cligase"/>
</dbReference>
<dbReference type="NCBIfam" id="TIGR00878">
    <property type="entry name" value="purM"/>
    <property type="match status" value="1"/>
</dbReference>
<dbReference type="PANTHER" id="PTHR10520:SF12">
    <property type="entry name" value="TRIFUNCTIONAL PURINE BIOSYNTHETIC PROTEIN ADENOSINE-3"/>
    <property type="match status" value="1"/>
</dbReference>
<dbReference type="PANTHER" id="PTHR10520">
    <property type="entry name" value="TRIFUNCTIONAL PURINE BIOSYNTHETIC PROTEIN ADENOSINE-3-RELATED"/>
    <property type="match status" value="1"/>
</dbReference>
<dbReference type="Pfam" id="PF00586">
    <property type="entry name" value="AIRS"/>
    <property type="match status" value="1"/>
</dbReference>
<dbReference type="Pfam" id="PF02769">
    <property type="entry name" value="AIRS_C"/>
    <property type="match status" value="1"/>
</dbReference>
<dbReference type="SUPFAM" id="SSF56042">
    <property type="entry name" value="PurM C-terminal domain-like"/>
    <property type="match status" value="1"/>
</dbReference>
<dbReference type="SUPFAM" id="SSF55326">
    <property type="entry name" value="PurM N-terminal domain-like"/>
    <property type="match status" value="1"/>
</dbReference>